<evidence type="ECO:0000250" key="1"/>
<evidence type="ECO:0000256" key="2">
    <source>
        <dbReference type="SAM" id="MobiDB-lite"/>
    </source>
</evidence>
<evidence type="ECO:0000305" key="3"/>
<proteinExistence type="inferred from homology"/>
<accession>Q05781</accession>
<organism>
    <name type="scientific">Escherichia coli</name>
    <dbReference type="NCBI Taxonomy" id="562"/>
    <lineage>
        <taxon>Bacteria</taxon>
        <taxon>Pseudomonadati</taxon>
        <taxon>Pseudomonadota</taxon>
        <taxon>Gammaproteobacteria</taxon>
        <taxon>Enterobacterales</taxon>
        <taxon>Enterobacteriaceae</taxon>
        <taxon>Escherichia</taxon>
    </lineage>
</organism>
<gene>
    <name type="primary">finO</name>
</gene>
<sequence>MTEQKRPVLTLKRKTEGETPVRSRKTIINVTTPPKWKVKKQKLAEKAAREAELAAKKAQARQALSIYLNLPSLDEAVNTLKPWWPGLFDGDTPRLLACGIRDVLLEDVAHGNIPLSHKKLRRALKAITRSESYLCAMKAGACRYDTEGYVTEHISQEEEAYAAERLDKIRRQNRIKAELQAVLDEK</sequence>
<comment type="function">
    <text evidence="1">One of the components on the FinOP fertility inhibition complex, which inhibits the expression of traJ gene, which in turn regulates the expression of some 20 transfer genes. The transfer genes are responsible for the process, called conjugal transfer, in which DNA is transmitted from one bacterial host to another. RNA-binding that interacts with the traJ mRNA and its antisense RNA, finP, stabilizing finP against endonucleolytic degradation and facilitating sense-antisense RNA recognition (By similarity).</text>
</comment>
<comment type="similarity">
    <text evidence="3">Belongs to the FinO family.</text>
</comment>
<geneLocation type="plasmid">
    <name>IncFII ColB2</name>
</geneLocation>
<protein>
    <recommendedName>
        <fullName>Fertility inhibition protein</fullName>
    </recommendedName>
    <alternativeName>
        <fullName>Conjugal transfer repressor</fullName>
    </alternativeName>
</protein>
<reference key="1">
    <citation type="journal article" date="1992" name="Mol. Microbiol.">
        <title>Differential levels of fertility inhibition among F-like plasmids are related to the cellular concentration of finO mRNA.</title>
        <authorList>
            <person name="van Biesen T."/>
            <person name="Frost L.S."/>
        </authorList>
    </citation>
    <scope>NUCLEOTIDE SEQUENCE [GENOMIC DNA]</scope>
</reference>
<name>FINO4_ECOLX</name>
<feature type="chain" id="PRO_0000068353" description="Fertility inhibition protein">
    <location>
        <begin position="1"/>
        <end position="186"/>
    </location>
</feature>
<feature type="region of interest" description="Disordered" evidence="2">
    <location>
        <begin position="1"/>
        <end position="20"/>
    </location>
</feature>
<keyword id="KW-0184">Conjugation</keyword>
<keyword id="KW-0614">Plasmid</keyword>
<keyword id="KW-0678">Repressor</keyword>
<keyword id="KW-0694">RNA-binding</keyword>
<keyword id="KW-0804">Transcription</keyword>
<keyword id="KW-0805">Transcription regulation</keyword>
<dbReference type="EMBL" id="X62481">
    <property type="protein sequence ID" value="CAA44348.1"/>
    <property type="molecule type" value="Genomic_DNA"/>
</dbReference>
<dbReference type="SMR" id="Q05781"/>
<dbReference type="GO" id="GO:0003723">
    <property type="term" value="F:RNA binding"/>
    <property type="evidence" value="ECO:0007669"/>
    <property type="project" value="UniProtKB-KW"/>
</dbReference>
<dbReference type="CDD" id="cd00236">
    <property type="entry name" value="FinO_conjug_rep"/>
    <property type="match status" value="1"/>
</dbReference>
<dbReference type="Gene3D" id="1.10.1710.10">
    <property type="entry name" value="ProQ/FinO domain"/>
    <property type="match status" value="1"/>
</dbReference>
<dbReference type="InterPro" id="IPR021065">
    <property type="entry name" value="Fertility_inhibition_FinO_N"/>
</dbReference>
<dbReference type="InterPro" id="IPR016103">
    <property type="entry name" value="ProQ/FinO"/>
</dbReference>
<dbReference type="InterPro" id="IPR036442">
    <property type="entry name" value="ProQ/FinO_sf"/>
</dbReference>
<dbReference type="NCBIfam" id="NF010317">
    <property type="entry name" value="PRK13754.1"/>
    <property type="match status" value="1"/>
</dbReference>
<dbReference type="Pfam" id="PF12602">
    <property type="entry name" value="FinO_N"/>
    <property type="match status" value="1"/>
</dbReference>
<dbReference type="Pfam" id="PF04352">
    <property type="entry name" value="ProQ"/>
    <property type="match status" value="1"/>
</dbReference>
<dbReference type="SMART" id="SM00945">
    <property type="entry name" value="ProQ"/>
    <property type="match status" value="1"/>
</dbReference>
<dbReference type="SUPFAM" id="SSF48657">
    <property type="entry name" value="FinO-like"/>
    <property type="match status" value="1"/>
</dbReference>